<comment type="subcellular location">
    <subcellularLocation>
        <location evidence="2">Secreted</location>
    </subcellularLocation>
</comment>
<sequence length="130" mass="15013">MKFIYKLLFILSIVLFLFNNIITINGEIEEVEEINDECSGVRCDKVDKLLCLTSHRPVARYIDRKMAKEKNVLLCCPICLIPSTSFCNHSTSSLHDPKLKYLSGNVYTCYDGEKECNLHTNECEILPQYR</sequence>
<accession>Q54M38</accession>
<organism>
    <name type="scientific">Dictyostelium discoideum</name>
    <name type="common">Social amoeba</name>
    <dbReference type="NCBI Taxonomy" id="44689"/>
    <lineage>
        <taxon>Eukaryota</taxon>
        <taxon>Amoebozoa</taxon>
        <taxon>Evosea</taxon>
        <taxon>Eumycetozoa</taxon>
        <taxon>Dictyostelia</taxon>
        <taxon>Dictyosteliales</taxon>
        <taxon>Dictyosteliaceae</taxon>
        <taxon>Dictyostelium</taxon>
    </lineage>
</organism>
<evidence type="ECO:0000255" key="1"/>
<evidence type="ECO:0000305" key="2"/>
<feature type="signal peptide" evidence="1">
    <location>
        <begin position="1"/>
        <end position="26"/>
    </location>
</feature>
<feature type="chain" id="PRO_0000348502" description="Uncharacterized protein DDB_G0286225">
    <location>
        <begin position="27"/>
        <end position="130"/>
    </location>
</feature>
<feature type="glycosylation site" description="N-linked (GlcNAc...) asparagine" evidence="1">
    <location>
        <position position="88"/>
    </location>
</feature>
<dbReference type="EMBL" id="AAFI02000085">
    <property type="protein sequence ID" value="EAL64288.1"/>
    <property type="molecule type" value="Genomic_DNA"/>
</dbReference>
<dbReference type="RefSeq" id="XP_637793.1">
    <property type="nucleotide sequence ID" value="XM_632701.1"/>
</dbReference>
<dbReference type="FunCoup" id="Q54M38">
    <property type="interactions" value="877"/>
</dbReference>
<dbReference type="GlyGen" id="Q54M38">
    <property type="glycosylation" value="1 site"/>
</dbReference>
<dbReference type="PaxDb" id="44689-DDB0305105"/>
<dbReference type="EnsemblProtists" id="EAL64288">
    <property type="protein sequence ID" value="EAL64288"/>
    <property type="gene ID" value="DDB_G0286225"/>
</dbReference>
<dbReference type="GeneID" id="8625507"/>
<dbReference type="KEGG" id="ddi:DDB_G0286225"/>
<dbReference type="dictyBase" id="DDB_G0286225"/>
<dbReference type="VEuPathDB" id="AmoebaDB:DDB_G0286225"/>
<dbReference type="eggNOG" id="ENOG502RIE2">
    <property type="taxonomic scope" value="Eukaryota"/>
</dbReference>
<dbReference type="HOGENOM" id="CLU_1942029_0_0_1"/>
<dbReference type="InParanoid" id="Q54M38"/>
<dbReference type="OMA" id="NDECSGV"/>
<dbReference type="PRO" id="PR:Q54M38"/>
<dbReference type="Proteomes" id="UP000002195">
    <property type="component" value="Chromosome 4"/>
</dbReference>
<dbReference type="GO" id="GO:0005576">
    <property type="term" value="C:extracellular region"/>
    <property type="evidence" value="ECO:0007669"/>
    <property type="project" value="UniProtKB-SubCell"/>
</dbReference>
<keyword id="KW-0325">Glycoprotein</keyword>
<keyword id="KW-1185">Reference proteome</keyword>
<keyword id="KW-0964">Secreted</keyword>
<keyword id="KW-0732">Signal</keyword>
<reference key="1">
    <citation type="journal article" date="2005" name="Nature">
        <title>The genome of the social amoeba Dictyostelium discoideum.</title>
        <authorList>
            <person name="Eichinger L."/>
            <person name="Pachebat J.A."/>
            <person name="Gloeckner G."/>
            <person name="Rajandream M.A."/>
            <person name="Sucgang R."/>
            <person name="Berriman M."/>
            <person name="Song J."/>
            <person name="Olsen R."/>
            <person name="Szafranski K."/>
            <person name="Xu Q."/>
            <person name="Tunggal B."/>
            <person name="Kummerfeld S."/>
            <person name="Madera M."/>
            <person name="Konfortov B.A."/>
            <person name="Rivero F."/>
            <person name="Bankier A.T."/>
            <person name="Lehmann R."/>
            <person name="Hamlin N."/>
            <person name="Davies R."/>
            <person name="Gaudet P."/>
            <person name="Fey P."/>
            <person name="Pilcher K."/>
            <person name="Chen G."/>
            <person name="Saunders D."/>
            <person name="Sodergren E.J."/>
            <person name="Davis P."/>
            <person name="Kerhornou A."/>
            <person name="Nie X."/>
            <person name="Hall N."/>
            <person name="Anjard C."/>
            <person name="Hemphill L."/>
            <person name="Bason N."/>
            <person name="Farbrother P."/>
            <person name="Desany B."/>
            <person name="Just E."/>
            <person name="Morio T."/>
            <person name="Rost R."/>
            <person name="Churcher C.M."/>
            <person name="Cooper J."/>
            <person name="Haydock S."/>
            <person name="van Driessche N."/>
            <person name="Cronin A."/>
            <person name="Goodhead I."/>
            <person name="Muzny D.M."/>
            <person name="Mourier T."/>
            <person name="Pain A."/>
            <person name="Lu M."/>
            <person name="Harper D."/>
            <person name="Lindsay R."/>
            <person name="Hauser H."/>
            <person name="James K.D."/>
            <person name="Quiles M."/>
            <person name="Madan Babu M."/>
            <person name="Saito T."/>
            <person name="Buchrieser C."/>
            <person name="Wardroper A."/>
            <person name="Felder M."/>
            <person name="Thangavelu M."/>
            <person name="Johnson D."/>
            <person name="Knights A."/>
            <person name="Loulseged H."/>
            <person name="Mungall K.L."/>
            <person name="Oliver K."/>
            <person name="Price C."/>
            <person name="Quail M.A."/>
            <person name="Urushihara H."/>
            <person name="Hernandez J."/>
            <person name="Rabbinowitsch E."/>
            <person name="Steffen D."/>
            <person name="Sanders M."/>
            <person name="Ma J."/>
            <person name="Kohara Y."/>
            <person name="Sharp S."/>
            <person name="Simmonds M.N."/>
            <person name="Spiegler S."/>
            <person name="Tivey A."/>
            <person name="Sugano S."/>
            <person name="White B."/>
            <person name="Walker D."/>
            <person name="Woodward J.R."/>
            <person name="Winckler T."/>
            <person name="Tanaka Y."/>
            <person name="Shaulsky G."/>
            <person name="Schleicher M."/>
            <person name="Weinstock G.M."/>
            <person name="Rosenthal A."/>
            <person name="Cox E.C."/>
            <person name="Chisholm R.L."/>
            <person name="Gibbs R.A."/>
            <person name="Loomis W.F."/>
            <person name="Platzer M."/>
            <person name="Kay R.R."/>
            <person name="Williams J.G."/>
            <person name="Dear P.H."/>
            <person name="Noegel A.A."/>
            <person name="Barrell B.G."/>
            <person name="Kuspa A."/>
        </authorList>
    </citation>
    <scope>NUCLEOTIDE SEQUENCE [LARGE SCALE GENOMIC DNA]</scope>
    <source>
        <strain>AX4</strain>
    </source>
</reference>
<name>Y6867_DICDI</name>
<proteinExistence type="inferred from homology"/>
<protein>
    <recommendedName>
        <fullName>Uncharacterized protein DDB_G0286225</fullName>
    </recommendedName>
</protein>
<gene>
    <name type="ORF">DDB_G0286225</name>
</gene>